<gene>
    <name evidence="13" type="primary">DBP2</name>
    <name type="ordered locus">YNL112W</name>
    <name type="ORF">N1945</name>
</gene>
<protein>
    <recommendedName>
        <fullName evidence="14">ATP-dependent RNA helicase DBP2</fullName>
        <ecNumber evidence="7 8">3.6.4.13</ecNumber>
    </recommendedName>
    <alternativeName>
        <fullName evidence="13">DEAD box protein 2</fullName>
    </alternativeName>
    <alternativeName>
        <fullName evidence="12">p68-like protein</fullName>
    </alternativeName>
</protein>
<keyword id="KW-0002">3D-structure</keyword>
<keyword id="KW-0067">ATP-binding</keyword>
<keyword id="KW-0963">Cytoplasm</keyword>
<keyword id="KW-0347">Helicase</keyword>
<keyword id="KW-0378">Hydrolase</keyword>
<keyword id="KW-1017">Isopeptide bond</keyword>
<keyword id="KW-0488">Methylation</keyword>
<keyword id="KW-0866">Nonsense-mediated mRNA decay</keyword>
<keyword id="KW-0547">Nucleotide-binding</keyword>
<keyword id="KW-0539">Nucleus</keyword>
<keyword id="KW-0597">Phosphoprotein</keyword>
<keyword id="KW-1185">Reference proteome</keyword>
<keyword id="KW-0690">Ribosome biogenesis</keyword>
<keyword id="KW-0694">RNA-binding</keyword>
<keyword id="KW-0698">rRNA processing</keyword>
<keyword id="KW-0832">Ubl conjugation</keyword>
<comment type="function">
    <text evidence="4 7 8 11">ATP-dependent RNA helicase involved nonsense-mediated mRNA decay and ribosome biogenesis through rRNA processing (PubMed:11585918, PubMed:7883168). Associates directly with chromatin, correlating with transcriptional activity (PubMed:22679025). Required for assembly of mRNA-binding proteins YRA1, NAB2, and MEX67 onto poly(A)+ RNA (PubMed:23721653).</text>
</comment>
<comment type="catalytic activity">
    <reaction evidence="7 8">
        <text>ATP + H2O = ADP + phosphate + H(+)</text>
        <dbReference type="Rhea" id="RHEA:13065"/>
        <dbReference type="ChEBI" id="CHEBI:15377"/>
        <dbReference type="ChEBI" id="CHEBI:15378"/>
        <dbReference type="ChEBI" id="CHEBI:30616"/>
        <dbReference type="ChEBI" id="CHEBI:43474"/>
        <dbReference type="ChEBI" id="CHEBI:456216"/>
        <dbReference type="EC" id="3.6.4.13"/>
    </reaction>
    <physiologicalReaction direction="left-to-right" evidence="7">
        <dbReference type="Rhea" id="RHEA:13066"/>
    </physiologicalReaction>
</comment>
<comment type="subunit">
    <text evidence="4 11">Interacts with UPF1. Associates with polysomes.</text>
</comment>
<comment type="subcellular location">
    <subcellularLocation>
        <location evidence="5">Cytoplasm</location>
    </subcellularLocation>
    <subcellularLocation>
        <location evidence="5 7">Nucleus</location>
    </subcellularLocation>
</comment>
<comment type="domain">
    <text>The Q motif is unique to and characteristic of the DEAD box family of RNA helicases and controls ATP binding and hydrolysis.</text>
</comment>
<comment type="disruption phenotype">
    <text evidence="8">Results in defective assembly of nuclear mRNPs.</text>
</comment>
<comment type="miscellaneous">
    <text evidence="6">Present with 33100 molecules/cell in log phase SD medium.</text>
</comment>
<comment type="miscellaneous">
    <text evidence="15">The gene for DBP2 has an unusual intron both because of its size and because of its location near the 3' end of the gene. It may have a function in an intron-mediated negative feedback loop regulating DBP2 expression.</text>
</comment>
<comment type="similarity">
    <text evidence="14">Belongs to the DEAD box helicase family. DDX5/DBP2 subfamily.</text>
</comment>
<organism>
    <name type="scientific">Saccharomyces cerevisiae (strain ATCC 204508 / S288c)</name>
    <name type="common">Baker's yeast</name>
    <dbReference type="NCBI Taxonomy" id="559292"/>
    <lineage>
        <taxon>Eukaryota</taxon>
        <taxon>Fungi</taxon>
        <taxon>Dikarya</taxon>
        <taxon>Ascomycota</taxon>
        <taxon>Saccharomycotina</taxon>
        <taxon>Saccharomycetes</taxon>
        <taxon>Saccharomycetales</taxon>
        <taxon>Saccharomycetaceae</taxon>
        <taxon>Saccharomyces</taxon>
    </lineage>
</organism>
<proteinExistence type="evidence at protein level"/>
<sequence length="546" mass="60999">MTYGGRDQQYNKTNYKSRGGDFRGGRNSDRNSYNDRPQGGNYRGGFGGRSNYNQPQELIKPNWDEELPKLPTFEKNFYVEHESVRDRSDSEIAQFRKENEMTISGHDIPKPITTFDEAGFPDYVLNEVKAEGFDKPTGIQCQGWPMALSGRDMVGIAATGSGKTLSYCLPGIVHINAQPLLAPGDGPIVLVLAPTRELAVQIQTECSKFGHSSRIRNTCVYGGVPKSQQIRDLSRGSEIVIATPGRLIDMLEIGKTNLKRVTYLVLDEADRMLDMGFEPQIRKIVDQIRPDRQTLMWSATWPKEVKQLAADYLNDPIQVQVGSLELSASHNITQIVEVVSDFEKRDRLNKYLETASQDNEYKTLIFASTKRMCDDITKYLREDGWPALAIHGDKDQRERDWVLQEFRNGRSPIMVATDVAARGIDVKGINYVINYDMPGNIEDYVHRIGRTGRAGATGTAISFFTEQNKGLGAKLISIMREANQNIPPELLKYDRRSYGGGHPRYGGGRGGRGGYGRRGGYGGGRGGYGGNRQRDGGWGNRGRSNY</sequence>
<name>DBP2_YEAST</name>
<feature type="chain" id="PRO_0000055000" description="ATP-dependent RNA helicase DBP2">
    <location>
        <begin position="1"/>
        <end position="546"/>
    </location>
</feature>
<feature type="domain" description="Helicase ATP-binding" evidence="1">
    <location>
        <begin position="144"/>
        <end position="319"/>
    </location>
</feature>
<feature type="domain" description="Helicase C-terminal" evidence="2">
    <location>
        <begin position="347"/>
        <end position="494"/>
    </location>
</feature>
<feature type="region of interest" description="Disordered" evidence="3">
    <location>
        <begin position="1"/>
        <end position="56"/>
    </location>
</feature>
<feature type="region of interest" description="Disordered" evidence="3">
    <location>
        <begin position="493"/>
        <end position="546"/>
    </location>
</feature>
<feature type="region of interest" description="RNA-binding RGG-box">
    <location>
        <begin position="505"/>
        <end position="530"/>
    </location>
</feature>
<feature type="short sequence motif" description="Q motif">
    <location>
        <begin position="113"/>
        <end position="141"/>
    </location>
</feature>
<feature type="short sequence motif" description="DEAD box">
    <location>
        <begin position="267"/>
        <end position="270"/>
    </location>
</feature>
<feature type="compositionally biased region" description="Basic and acidic residues" evidence="3">
    <location>
        <begin position="18"/>
        <end position="33"/>
    </location>
</feature>
<feature type="compositionally biased region" description="Gly residues" evidence="3">
    <location>
        <begin position="498"/>
        <end position="540"/>
    </location>
</feature>
<feature type="binding site">
    <location>
        <begin position="157"/>
        <end position="164"/>
    </location>
    <ligand>
        <name>ATP</name>
        <dbReference type="ChEBI" id="CHEBI:30616"/>
    </ligand>
</feature>
<feature type="modified residue" description="Omega-N-methylarginine" evidence="10">
    <location>
        <position position="18"/>
    </location>
</feature>
<feature type="modified residue" description="Omega-N-methylarginine" evidence="9 10">
    <location>
        <position position="43"/>
    </location>
</feature>
<feature type="modified residue" description="Phosphoserine" evidence="17 18">
    <location>
        <position position="88"/>
    </location>
</feature>
<feature type="modified residue" description="Phosphoserine" evidence="16 17 18">
    <location>
        <position position="90"/>
    </location>
</feature>
<feature type="modified residue" description="Dimethylated arginine; alternate" evidence="10">
    <location>
        <position position="509"/>
    </location>
</feature>
<feature type="modified residue" description="Omega-N-methylarginine; alternate" evidence="9 10">
    <location>
        <position position="509"/>
    </location>
</feature>
<feature type="modified residue" description="Dimethylated arginine; alternate" evidence="10">
    <location>
        <position position="512"/>
    </location>
</feature>
<feature type="modified residue" description="Omega-N-methylarginine; alternate" evidence="9 10">
    <location>
        <position position="512"/>
    </location>
</feature>
<feature type="modified residue" description="Dimethylated arginine; alternate" evidence="10">
    <location>
        <position position="518"/>
    </location>
</feature>
<feature type="modified residue" description="Omega-N-methylarginine; alternate" evidence="9 10">
    <location>
        <position position="518"/>
    </location>
</feature>
<feature type="modified residue" description="Dimethylated arginine; alternate" evidence="10">
    <location>
        <position position="525"/>
    </location>
</feature>
<feature type="modified residue" description="Omega-N-methylarginine; alternate" evidence="9 10">
    <location>
        <position position="525"/>
    </location>
</feature>
<feature type="cross-link" description="Glycyl lysine isopeptide (Lys-Gly) (interchain with G-Cter in ubiquitin)" evidence="19">
    <location>
        <position position="474"/>
    </location>
</feature>
<feature type="mutagenesis site" description="Abolishes enzymatic activity." evidence="7">
    <original>K</original>
    <variation>N</variation>
    <location>
        <position position="163"/>
    </location>
</feature>
<feature type="mutagenesis site" description="Decreases nonsense-mediated mRNA decay." evidence="4">
    <original>K</original>
    <variation>R</variation>
    <location>
        <position position="163"/>
    </location>
</feature>
<feature type="mutagenesis site" description="Decreases nonsense-mediated mRNA decay." evidence="4">
    <original>E</original>
    <variation>D</variation>
    <location>
        <position position="268"/>
    </location>
</feature>
<feature type="mutagenesis site" description="Abolishes enzymatic activity." evidence="7">
    <original>E</original>
    <variation>Q</variation>
    <location>
        <position position="268"/>
    </location>
</feature>
<feature type="mutagenesis site" description="Decreases nonsense-mediated mRNA decay." evidence="4">
    <original>T</original>
    <variation>A</variation>
    <location>
        <position position="300"/>
    </location>
</feature>
<feature type="mutagenesis site" description="Decreases nonsense-mediated mRNA decay." evidence="4">
    <original>R</original>
    <variation>K</variation>
    <location>
        <position position="447"/>
    </location>
</feature>
<feature type="sequence conflict" description="In Ref. 2; CAA93395." evidence="14" ref="2">
    <original>D</original>
    <variation>GN</variation>
    <location>
        <position position="425"/>
    </location>
</feature>
<feature type="helix" evidence="21">
    <location>
        <begin position="63"/>
        <end position="66"/>
    </location>
</feature>
<feature type="helix" evidence="21">
    <location>
        <begin position="67"/>
        <end position="69"/>
    </location>
</feature>
<feature type="turn" evidence="21">
    <location>
        <begin position="82"/>
        <end position="84"/>
    </location>
</feature>
<feature type="strand" evidence="20">
    <location>
        <begin position="85"/>
        <end position="87"/>
    </location>
</feature>
<feature type="helix" evidence="21">
    <location>
        <begin position="91"/>
        <end position="97"/>
    </location>
</feature>
<feature type="turn" evidence="21">
    <location>
        <begin position="98"/>
        <end position="100"/>
    </location>
</feature>
<feature type="strand" evidence="21">
    <location>
        <begin position="102"/>
        <end position="107"/>
    </location>
</feature>
<feature type="helix" evidence="21">
    <location>
        <begin position="115"/>
        <end position="117"/>
    </location>
</feature>
<feature type="helix" evidence="21">
    <location>
        <begin position="122"/>
        <end position="131"/>
    </location>
</feature>
<feature type="helix" evidence="21">
    <location>
        <begin position="138"/>
        <end position="147"/>
    </location>
</feature>
<feature type="strand" evidence="21">
    <location>
        <begin position="153"/>
        <end position="156"/>
    </location>
</feature>
<feature type="helix" evidence="21">
    <location>
        <begin position="163"/>
        <end position="175"/>
    </location>
</feature>
<feature type="turn" evidence="20">
    <location>
        <begin position="182"/>
        <end position="184"/>
    </location>
</feature>
<feature type="strand" evidence="21">
    <location>
        <begin position="188"/>
        <end position="192"/>
    </location>
</feature>
<feature type="helix" evidence="21">
    <location>
        <begin position="196"/>
        <end position="206"/>
    </location>
</feature>
<feature type="turn" evidence="21">
    <location>
        <begin position="211"/>
        <end position="214"/>
    </location>
</feature>
<feature type="strand" evidence="21">
    <location>
        <begin position="217"/>
        <end position="220"/>
    </location>
</feature>
<feature type="strand" evidence="21">
    <location>
        <begin position="222"/>
        <end position="224"/>
    </location>
</feature>
<feature type="helix" evidence="21">
    <location>
        <begin position="227"/>
        <end position="233"/>
    </location>
</feature>
<feature type="strand" evidence="21">
    <location>
        <begin position="238"/>
        <end position="242"/>
    </location>
</feature>
<feature type="helix" evidence="21">
    <location>
        <begin position="244"/>
        <end position="252"/>
    </location>
</feature>
<feature type="strand" evidence="21">
    <location>
        <begin position="263"/>
        <end position="266"/>
    </location>
</feature>
<feature type="helix" evidence="21">
    <location>
        <begin position="269"/>
        <end position="274"/>
    </location>
</feature>
<feature type="helix" evidence="21">
    <location>
        <begin position="278"/>
        <end position="284"/>
    </location>
</feature>
<feature type="helix" evidence="21">
    <location>
        <begin position="285"/>
        <end position="287"/>
    </location>
</feature>
<feature type="strand" evidence="21">
    <location>
        <begin position="293"/>
        <end position="299"/>
    </location>
</feature>
<feature type="helix" evidence="21">
    <location>
        <begin position="303"/>
        <end position="312"/>
    </location>
</feature>
<feature type="strand" evidence="21">
    <location>
        <begin position="317"/>
        <end position="320"/>
    </location>
</feature>
<feature type="strand" evidence="21">
    <location>
        <begin position="332"/>
        <end position="338"/>
    </location>
</feature>
<feature type="turn" evidence="21">
    <location>
        <begin position="341"/>
        <end position="343"/>
    </location>
</feature>
<feature type="helix" evidence="21">
    <location>
        <begin position="344"/>
        <end position="355"/>
    </location>
</feature>
<feature type="strand" evidence="21">
    <location>
        <begin position="358"/>
        <end position="360"/>
    </location>
</feature>
<feature type="strand" evidence="21">
    <location>
        <begin position="363"/>
        <end position="366"/>
    </location>
</feature>
<feature type="helix" evidence="21">
    <location>
        <begin position="370"/>
        <end position="383"/>
    </location>
</feature>
<feature type="strand" evidence="20">
    <location>
        <begin position="387"/>
        <end position="389"/>
    </location>
</feature>
<feature type="strand" evidence="21">
    <location>
        <begin position="392"/>
        <end position="394"/>
    </location>
</feature>
<feature type="helix" evidence="21">
    <location>
        <begin position="398"/>
        <end position="407"/>
    </location>
</feature>
<feature type="strand" evidence="21">
    <location>
        <begin position="410"/>
        <end position="416"/>
    </location>
</feature>
<feature type="turn" evidence="21">
    <location>
        <begin position="418"/>
        <end position="423"/>
    </location>
</feature>
<feature type="strand" evidence="21">
    <location>
        <begin position="432"/>
        <end position="436"/>
    </location>
</feature>
<feature type="helix" evidence="21">
    <location>
        <begin position="441"/>
        <end position="448"/>
    </location>
</feature>
<feature type="strand" evidence="21">
    <location>
        <begin position="453"/>
        <end position="455"/>
    </location>
</feature>
<feature type="strand" evidence="21">
    <location>
        <begin position="459"/>
        <end position="464"/>
    </location>
</feature>
<feature type="helix" evidence="21">
    <location>
        <begin position="466"/>
        <end position="468"/>
    </location>
</feature>
<feature type="helix" evidence="21">
    <location>
        <begin position="469"/>
        <end position="481"/>
    </location>
</feature>
<feature type="helix" evidence="21">
    <location>
        <begin position="488"/>
        <end position="493"/>
    </location>
</feature>
<evidence type="ECO:0000255" key="1">
    <source>
        <dbReference type="PROSITE-ProRule" id="PRU00541"/>
    </source>
</evidence>
<evidence type="ECO:0000255" key="2">
    <source>
        <dbReference type="PROSITE-ProRule" id="PRU00542"/>
    </source>
</evidence>
<evidence type="ECO:0000256" key="3">
    <source>
        <dbReference type="SAM" id="MobiDB-lite"/>
    </source>
</evidence>
<evidence type="ECO:0000269" key="4">
    <source>
    </source>
</evidence>
<evidence type="ECO:0000269" key="5">
    <source>
    </source>
</evidence>
<evidence type="ECO:0000269" key="6">
    <source>
    </source>
</evidence>
<evidence type="ECO:0000269" key="7">
    <source>
    </source>
</evidence>
<evidence type="ECO:0000269" key="8">
    <source>
    </source>
</evidence>
<evidence type="ECO:0000269" key="9">
    <source>
    </source>
</evidence>
<evidence type="ECO:0000269" key="10">
    <source>
    </source>
</evidence>
<evidence type="ECO:0000269" key="11">
    <source>
    </source>
</evidence>
<evidence type="ECO:0000303" key="12">
    <source>
    </source>
</evidence>
<evidence type="ECO:0000303" key="13">
    <source>
    </source>
</evidence>
<evidence type="ECO:0000305" key="14"/>
<evidence type="ECO:0000305" key="15">
    <source>
    </source>
</evidence>
<evidence type="ECO:0007744" key="16">
    <source>
    </source>
</evidence>
<evidence type="ECO:0007744" key="17">
    <source>
    </source>
</evidence>
<evidence type="ECO:0007744" key="18">
    <source>
    </source>
</evidence>
<evidence type="ECO:0007744" key="19">
    <source>
    </source>
</evidence>
<evidence type="ECO:0007829" key="20">
    <source>
        <dbReference type="PDB" id="8ARK"/>
    </source>
</evidence>
<evidence type="ECO:0007829" key="21">
    <source>
        <dbReference type="PDB" id="8ARP"/>
    </source>
</evidence>
<accession>P24783</accession>
<accession>D6W169</accession>
<accession>Q05456</accession>
<reference key="1">
    <citation type="journal article" date="1991" name="Mol. Cell. Biol.">
        <title>p68 RNA helicase: identification of a nucleolar form and cloning of related genes containing a conserved intron in yeasts.</title>
        <authorList>
            <person name="Iggo R.D."/>
            <person name="Jamieson D.J."/>
            <person name="McNeill S.A."/>
            <person name="Southgate J."/>
            <person name="McPheat J."/>
            <person name="Lane D.P."/>
        </authorList>
    </citation>
    <scope>NUCLEOTIDE SEQUENCE [GENOMIC DNA]</scope>
</reference>
<reference key="2">
    <citation type="journal article" date="1997" name="Yeast">
        <title>The DNA sequence of cosmid 14-13b from chromosome XIV of Saccharomyces cerevisiae reveals an unusually high number of overlapping open reading frames.</title>
        <authorList>
            <person name="de Antoni A."/>
            <person name="D'Angelo M."/>
            <person name="Dal Pero F."/>
            <person name="Sartorello F."/>
            <person name="Pandolfo D."/>
            <person name="Pallavicini A."/>
            <person name="Lanfranchi G."/>
            <person name="Valle G."/>
        </authorList>
    </citation>
    <scope>NUCLEOTIDE SEQUENCE [GENOMIC DNA]</scope>
</reference>
<reference key="3">
    <citation type="journal article" date="1997" name="Nature">
        <title>The nucleotide sequence of Saccharomyces cerevisiae chromosome XIV and its evolutionary implications.</title>
        <authorList>
            <person name="Philippsen P."/>
            <person name="Kleine K."/>
            <person name="Poehlmann R."/>
            <person name="Duesterhoeft A."/>
            <person name="Hamberg K."/>
            <person name="Hegemann J.H."/>
            <person name="Obermaier B."/>
            <person name="Urrestarazu L.A."/>
            <person name="Aert R."/>
            <person name="Albermann K."/>
            <person name="Altmann R."/>
            <person name="Andre B."/>
            <person name="Baladron V."/>
            <person name="Ballesta J.P.G."/>
            <person name="Becam A.-M."/>
            <person name="Beinhauer J.D."/>
            <person name="Boskovic J."/>
            <person name="Buitrago M.J."/>
            <person name="Bussereau F."/>
            <person name="Coster F."/>
            <person name="Crouzet M."/>
            <person name="D'Angelo M."/>
            <person name="Dal Pero F."/>
            <person name="De Antoni A."/>
            <person name="del Rey F."/>
            <person name="Doignon F."/>
            <person name="Domdey H."/>
            <person name="Dubois E."/>
            <person name="Fiedler T.A."/>
            <person name="Fleig U."/>
            <person name="Floeth M."/>
            <person name="Fritz C."/>
            <person name="Gaillardin C."/>
            <person name="Garcia-Cantalejo J.M."/>
            <person name="Glansdorff N."/>
            <person name="Goffeau A."/>
            <person name="Gueldener U."/>
            <person name="Herbert C.J."/>
            <person name="Heumann K."/>
            <person name="Heuss-Neitzel D."/>
            <person name="Hilbert H."/>
            <person name="Hinni K."/>
            <person name="Iraqui Houssaini I."/>
            <person name="Jacquet M."/>
            <person name="Jimenez A."/>
            <person name="Jonniaux J.-L."/>
            <person name="Karpfinger-Hartl L."/>
            <person name="Lanfranchi G."/>
            <person name="Lepingle A."/>
            <person name="Levesque H."/>
            <person name="Lyck R."/>
            <person name="Maftahi M."/>
            <person name="Mallet L."/>
            <person name="Maurer C.T.C."/>
            <person name="Messenguy F."/>
            <person name="Mewes H.-W."/>
            <person name="Moestl D."/>
            <person name="Nasr F."/>
            <person name="Nicaud J.-M."/>
            <person name="Niedenthal R.K."/>
            <person name="Pandolfo D."/>
            <person name="Pierard A."/>
            <person name="Piravandi E."/>
            <person name="Planta R.J."/>
            <person name="Pohl T.M."/>
            <person name="Purnelle B."/>
            <person name="Rebischung C."/>
            <person name="Remacha M.A."/>
            <person name="Revuelta J.L."/>
            <person name="Rinke M."/>
            <person name="Saiz J.E."/>
            <person name="Sartorello F."/>
            <person name="Scherens B."/>
            <person name="Sen-Gupta M."/>
            <person name="Soler-Mira A."/>
            <person name="Urbanus J.H.M."/>
            <person name="Valle G."/>
            <person name="Van Dyck L."/>
            <person name="Verhasselt P."/>
            <person name="Vierendeels F."/>
            <person name="Vissers S."/>
            <person name="Voet M."/>
            <person name="Volckaert G."/>
            <person name="Wach A."/>
            <person name="Wambutt R."/>
            <person name="Wedler H."/>
            <person name="Zollner A."/>
            <person name="Hani J."/>
        </authorList>
    </citation>
    <scope>NUCLEOTIDE SEQUENCE [LARGE SCALE GENOMIC DNA]</scope>
    <source>
        <strain>ATCC 204508 / S288c</strain>
    </source>
</reference>
<reference key="4">
    <citation type="journal article" date="2014" name="G3 (Bethesda)">
        <title>The reference genome sequence of Saccharomyces cerevisiae: Then and now.</title>
        <authorList>
            <person name="Engel S.R."/>
            <person name="Dietrich F.S."/>
            <person name="Fisk D.G."/>
            <person name="Binkley G."/>
            <person name="Balakrishnan R."/>
            <person name="Costanzo M.C."/>
            <person name="Dwight S.S."/>
            <person name="Hitz B.C."/>
            <person name="Karra K."/>
            <person name="Nash R.S."/>
            <person name="Weng S."/>
            <person name="Wong E.D."/>
            <person name="Lloyd P."/>
            <person name="Skrzypek M.S."/>
            <person name="Miyasato S.R."/>
            <person name="Simison M."/>
            <person name="Cherry J.M."/>
        </authorList>
    </citation>
    <scope>GENOME REANNOTATION</scope>
    <source>
        <strain>ATCC 204508 / S288c</strain>
    </source>
</reference>
<reference key="5">
    <citation type="journal article" date="1991" name="J. Biol. Chem.">
        <title>RPC19, the gene for a subunit common to yeast RNA polymerases A (I) and C (III).</title>
        <authorList>
            <person name="Dequard-Chablat M."/>
            <person name="Riva M."/>
            <person name="Carles C."/>
            <person name="Sentenac A."/>
        </authorList>
    </citation>
    <scope>NUCLEOTIDE SEQUENCE [GENOMIC DNA] OF 1-18</scope>
</reference>
<reference key="6">
    <citation type="journal article" date="1995" name="EMBO J.">
        <title>Autoregulation of expression of the yeast Dbp2p 'DEAD-box' protein is mediated by sequences in the conserved DBP2 intron.</title>
        <authorList>
            <person name="Barta I."/>
            <person name="Iggo R."/>
        </authorList>
    </citation>
    <scope>INDUCTION</scope>
</reference>
<reference key="7">
    <citation type="journal article" date="1995" name="Genes Dev.">
        <title>Identification of a novel component of the nonsense-mediated mRNA decay pathway by use of an interacting protein screen.</title>
        <authorList>
            <person name="He F."/>
            <person name="Jacobson A."/>
        </authorList>
    </citation>
    <scope>FUNCTION</scope>
    <scope>INTERACTION WITH UPF1</scope>
</reference>
<reference key="8">
    <citation type="journal article" date="2001" name="Mol. Cell. Biol.">
        <title>Absence of Dbp2p alters both nonsense-mediated mRNA decay and rRNA processing.</title>
        <authorList>
            <person name="Bond A.T."/>
            <person name="Mangus D.A."/>
            <person name="He F."/>
            <person name="Jacobson A."/>
        </authorList>
    </citation>
    <scope>FUNCTION</scope>
    <scope>SUBCELLULAR LOCATION</scope>
    <scope>INTERACTION WITH UPF1</scope>
    <scope>MUTAGENESIS OF LYS-163; GLU-268; THR-300 AND ARG-447</scope>
</reference>
<reference key="9">
    <citation type="journal article" date="2003" name="Nature">
        <title>Global analysis of protein localization in budding yeast.</title>
        <authorList>
            <person name="Huh W.-K."/>
            <person name="Falvo J.V."/>
            <person name="Gerke L.C."/>
            <person name="Carroll A.S."/>
            <person name="Howson R.W."/>
            <person name="Weissman J.S."/>
            <person name="O'Shea E.K."/>
        </authorList>
    </citation>
    <scope>SUBCELLULAR LOCATION [LARGE SCALE ANALYSIS]</scope>
</reference>
<reference key="10">
    <citation type="journal article" date="2003" name="Nature">
        <title>Global analysis of protein expression in yeast.</title>
        <authorList>
            <person name="Ghaemmaghami S."/>
            <person name="Huh W.-K."/>
            <person name="Bower K."/>
            <person name="Howson R.W."/>
            <person name="Belle A."/>
            <person name="Dephoure N."/>
            <person name="O'Shea E.K."/>
            <person name="Weissman J.S."/>
        </authorList>
    </citation>
    <scope>LEVEL OF PROTEIN EXPRESSION [LARGE SCALE ANALYSIS]</scope>
</reference>
<reference key="11">
    <citation type="journal article" date="2007" name="J. Proteome Res.">
        <title>Large-scale phosphorylation analysis of alpha-factor-arrested Saccharomyces cerevisiae.</title>
        <authorList>
            <person name="Li X."/>
            <person name="Gerber S.A."/>
            <person name="Rudner A.D."/>
            <person name="Beausoleil S.A."/>
            <person name="Haas W."/>
            <person name="Villen J."/>
            <person name="Elias J.E."/>
            <person name="Gygi S.P."/>
        </authorList>
    </citation>
    <scope>PHOSPHORYLATION [LARGE SCALE ANALYSIS] AT SER-90</scope>
    <scope>IDENTIFICATION BY MASS SPECTROMETRY [LARGE SCALE ANALYSIS]</scope>
    <source>
        <strain>ADR376</strain>
    </source>
</reference>
<reference key="12">
    <citation type="journal article" date="2007" name="Proc. Natl. Acad. Sci. U.S.A.">
        <title>Analysis of phosphorylation sites on proteins from Saccharomyces cerevisiae by electron transfer dissociation (ETD) mass spectrometry.</title>
        <authorList>
            <person name="Chi A."/>
            <person name="Huttenhower C."/>
            <person name="Geer L.Y."/>
            <person name="Coon J.J."/>
            <person name="Syka J.E.P."/>
            <person name="Bai D.L."/>
            <person name="Shabanowitz J."/>
            <person name="Burke D.J."/>
            <person name="Troyanskaya O.G."/>
            <person name="Hunt D.F."/>
        </authorList>
    </citation>
    <scope>IDENTIFICATION BY MASS SPECTROMETRY [LARGE SCALE ANALYSIS]</scope>
</reference>
<reference key="13">
    <citation type="journal article" date="2008" name="Mol. Cell. Proteomics">
        <title>A multidimensional chromatography technology for in-depth phosphoproteome analysis.</title>
        <authorList>
            <person name="Albuquerque C.P."/>
            <person name="Smolka M.B."/>
            <person name="Payne S.H."/>
            <person name="Bafna V."/>
            <person name="Eng J."/>
            <person name="Zhou H."/>
        </authorList>
    </citation>
    <scope>PHOSPHORYLATION [LARGE SCALE ANALYSIS] AT SER-88 AND SER-90</scope>
    <scope>IDENTIFICATION BY MASS SPECTROMETRY [LARGE SCALE ANALYSIS]</scope>
</reference>
<reference key="14">
    <citation type="journal article" date="2009" name="Science">
        <title>Global analysis of Cdk1 substrate phosphorylation sites provides insights into evolution.</title>
        <authorList>
            <person name="Holt L.J."/>
            <person name="Tuch B.B."/>
            <person name="Villen J."/>
            <person name="Johnson A.D."/>
            <person name="Gygi S.P."/>
            <person name="Morgan D.O."/>
        </authorList>
    </citation>
    <scope>PHOSPHORYLATION [LARGE SCALE ANALYSIS] AT SER-88 AND SER-90</scope>
    <scope>IDENTIFICATION BY MASS SPECTROMETRY [LARGE SCALE ANALYSIS]</scope>
</reference>
<reference key="15">
    <citation type="journal article" date="2012" name="J. Biol. Chem.">
        <title>The DEAD-box RNA helicase Dbp2 connects RNA quality control with repression of aberrant transcription.</title>
        <authorList>
            <person name="Cloutier S.C."/>
            <person name="Ma W.K."/>
            <person name="Nguyen L.T."/>
            <person name="Tran E.J."/>
        </authorList>
    </citation>
    <scope>FUNCTION</scope>
    <scope>CATALYTIC ACTIVITY</scope>
    <scope>SUBCELLULAR LOCATION</scope>
    <scope>MUTAGENESIS OF LYS-163 AND GLU-268</scope>
</reference>
<reference key="16">
    <citation type="journal article" date="2012" name="Proteomics">
        <title>Sites of ubiquitin attachment in Saccharomyces cerevisiae.</title>
        <authorList>
            <person name="Starita L.M."/>
            <person name="Lo R.S."/>
            <person name="Eng J.K."/>
            <person name="von Haller P.D."/>
            <person name="Fields S."/>
        </authorList>
    </citation>
    <scope>UBIQUITINATION [LARGE SCALE ANALYSIS] AT LYS-474</scope>
    <scope>IDENTIFICATION BY MASS SPECTROMETRY [LARGE SCALE ANALYSIS]</scope>
</reference>
<reference key="17">
    <citation type="journal article" date="2013" name="J. Mol. Biol.">
        <title>The DEAD-box protein Dbp2 functions with the RNA-binding protein Yra1 to promote mRNP assembly.</title>
        <authorList>
            <person name="Ma W.K."/>
            <person name="Cloutier S.C."/>
            <person name="Tran E.J."/>
        </authorList>
    </citation>
    <scope>FUNCTION</scope>
    <scope>CATALYTIC ACTIVITY</scope>
    <scope>DISRUPTION PHENOTYPE</scope>
</reference>
<reference key="18">
    <citation type="journal article" date="2015" name="Proteomics">
        <title>Expanding the yeast protein arginine methylome.</title>
        <authorList>
            <person name="Plank M."/>
            <person name="Fischer R."/>
            <person name="Geoghegan V."/>
            <person name="Charles P.D."/>
            <person name="Konietzny R."/>
            <person name="Acuto O."/>
            <person name="Pears C."/>
            <person name="Schofield C.J."/>
            <person name="Kessler B.M."/>
        </authorList>
    </citation>
    <scope>METHYLATION AT ARG-43; ARG-509; ARG-512; ARG-518 AND ARG-525</scope>
</reference>
<reference key="19">
    <citation type="journal article" date="2021" name="J. Proteome Res.">
        <title>Discovery of arginine methylation, phosphorylation, and their co-occurrence in condensate-associated proteins in Saccharomyces cerevisiae.</title>
        <authorList>
            <person name="Hamey J.J."/>
            <person name="Nguyen A."/>
            <person name="Wilkins M.R."/>
        </authorList>
    </citation>
    <scope>METHYLATION AT ARG-18; ARG-43; ARG-509; ARG-512; ARG-518 AND ARG-525</scope>
</reference>
<dbReference type="EC" id="3.6.4.13" evidence="7 8"/>
<dbReference type="EMBL" id="X52649">
    <property type="protein sequence ID" value="CAA36874.1"/>
    <property type="molecule type" value="Genomic_DNA"/>
</dbReference>
<dbReference type="EMBL" id="Z71388">
    <property type="protein sequence ID" value="CAA95991.1"/>
    <property type="molecule type" value="Genomic_DNA"/>
</dbReference>
<dbReference type="EMBL" id="Z69382">
    <property type="protein sequence ID" value="CAA93395.1"/>
    <property type="molecule type" value="Genomic_DNA"/>
</dbReference>
<dbReference type="EMBL" id="M64991">
    <property type="status" value="NOT_ANNOTATED_CDS"/>
    <property type="molecule type" value="Genomic_DNA"/>
</dbReference>
<dbReference type="EMBL" id="BK006947">
    <property type="protein sequence ID" value="DAA10435.1"/>
    <property type="molecule type" value="Genomic_DNA"/>
</dbReference>
<dbReference type="PIR" id="S13757">
    <property type="entry name" value="S13757"/>
</dbReference>
<dbReference type="RefSeq" id="NP_014287.3">
    <property type="nucleotide sequence ID" value="NM_001182950.3"/>
</dbReference>
<dbReference type="PDB" id="8ARK">
    <property type="method" value="X-ray"/>
    <property type="resolution" value="3.22 A"/>
    <property type="chains" value="A/B/C=1-546"/>
</dbReference>
<dbReference type="PDB" id="8ARP">
    <property type="method" value="X-ray"/>
    <property type="resolution" value="3.05 A"/>
    <property type="chains" value="A/B/C/D/E/F=1-546"/>
</dbReference>
<dbReference type="PDBsum" id="8ARK"/>
<dbReference type="PDBsum" id="8ARP"/>
<dbReference type="SMR" id="P24783"/>
<dbReference type="BioGRID" id="35713">
    <property type="interactions" value="374"/>
</dbReference>
<dbReference type="DIP" id="DIP-2438N"/>
<dbReference type="FunCoup" id="P24783">
    <property type="interactions" value="1519"/>
</dbReference>
<dbReference type="IntAct" id="P24783">
    <property type="interactions" value="111"/>
</dbReference>
<dbReference type="MINT" id="P24783"/>
<dbReference type="STRING" id="4932.YNL112W"/>
<dbReference type="iPTMnet" id="P24783"/>
<dbReference type="PaxDb" id="4932-YNL112W"/>
<dbReference type="PeptideAtlas" id="P24783"/>
<dbReference type="EnsemblFungi" id="YNL112W_mRNA">
    <property type="protein sequence ID" value="YNL112W"/>
    <property type="gene ID" value="YNL112W"/>
</dbReference>
<dbReference type="GeneID" id="855611"/>
<dbReference type="KEGG" id="sce:YNL112W"/>
<dbReference type="AGR" id="SGD:S000005056"/>
<dbReference type="SGD" id="S000005056">
    <property type="gene designation" value="DBP2"/>
</dbReference>
<dbReference type="VEuPathDB" id="FungiDB:YNL112W"/>
<dbReference type="eggNOG" id="KOG0331">
    <property type="taxonomic scope" value="Eukaryota"/>
</dbReference>
<dbReference type="GeneTree" id="ENSGT00940000160049"/>
<dbReference type="HOGENOM" id="CLU_003041_16_9_1"/>
<dbReference type="InParanoid" id="P24783"/>
<dbReference type="OMA" id="STMPKFE"/>
<dbReference type="OrthoDB" id="196131at2759"/>
<dbReference type="BioCyc" id="YEAST:G3O-33136-MONOMER"/>
<dbReference type="Reactome" id="R-SCE-3899300">
    <property type="pathway name" value="SUMOylation of transcription cofactors"/>
</dbReference>
<dbReference type="Reactome" id="R-SCE-9018519">
    <property type="pathway name" value="Estrogen-dependent gene expression"/>
</dbReference>
<dbReference type="BioGRID-ORCS" id="855611">
    <property type="hits" value="6 hits in 10 CRISPR screens"/>
</dbReference>
<dbReference type="CD-CODE" id="BDAE0F88">
    <property type="entry name" value="Nucleolus"/>
</dbReference>
<dbReference type="CD-CODE" id="E03F929F">
    <property type="entry name" value="Stress granule"/>
</dbReference>
<dbReference type="PRO" id="PR:P24783"/>
<dbReference type="Proteomes" id="UP000002311">
    <property type="component" value="Chromosome XIV"/>
</dbReference>
<dbReference type="RNAct" id="P24783">
    <property type="molecule type" value="protein"/>
</dbReference>
<dbReference type="GO" id="GO:0005737">
    <property type="term" value="C:cytoplasm"/>
    <property type="evidence" value="ECO:0007005"/>
    <property type="project" value="SGD"/>
</dbReference>
<dbReference type="GO" id="GO:0005739">
    <property type="term" value="C:mitochondrion"/>
    <property type="evidence" value="ECO:0007005"/>
    <property type="project" value="SGD"/>
</dbReference>
<dbReference type="GO" id="GO:0005634">
    <property type="term" value="C:nucleus"/>
    <property type="evidence" value="ECO:0000314"/>
    <property type="project" value="SGD"/>
</dbReference>
<dbReference type="GO" id="GO:1990904">
    <property type="term" value="C:ribonucleoprotein complex"/>
    <property type="evidence" value="ECO:0000318"/>
    <property type="project" value="GO_Central"/>
</dbReference>
<dbReference type="GO" id="GO:0005524">
    <property type="term" value="F:ATP binding"/>
    <property type="evidence" value="ECO:0007669"/>
    <property type="project" value="UniProtKB-KW"/>
</dbReference>
<dbReference type="GO" id="GO:0016887">
    <property type="term" value="F:ATP hydrolysis activity"/>
    <property type="evidence" value="ECO:0007669"/>
    <property type="project" value="RHEA"/>
</dbReference>
<dbReference type="GO" id="GO:0008186">
    <property type="term" value="F:ATP-dependent activity, acting on RNA"/>
    <property type="evidence" value="ECO:0000314"/>
    <property type="project" value="SGD"/>
</dbReference>
<dbReference type="GO" id="GO:0051880">
    <property type="term" value="F:G-quadruplex DNA binding"/>
    <property type="evidence" value="ECO:0000314"/>
    <property type="project" value="SGD"/>
</dbReference>
<dbReference type="GO" id="GO:0002151">
    <property type="term" value="F:G-quadruplex RNA binding"/>
    <property type="evidence" value="ECO:0000314"/>
    <property type="project" value="SGD"/>
</dbReference>
<dbReference type="GO" id="GO:0003729">
    <property type="term" value="F:mRNA binding"/>
    <property type="evidence" value="ECO:0000314"/>
    <property type="project" value="SGD"/>
</dbReference>
<dbReference type="GO" id="GO:0003724">
    <property type="term" value="F:RNA helicase activity"/>
    <property type="evidence" value="ECO:0000314"/>
    <property type="project" value="SGD"/>
</dbReference>
<dbReference type="GO" id="GO:0030515">
    <property type="term" value="F:snoRNA binding"/>
    <property type="evidence" value="ECO:0000314"/>
    <property type="project" value="SGD"/>
</dbReference>
<dbReference type="GO" id="GO:0000380">
    <property type="term" value="P:alternative mRNA splicing, via spliceosome"/>
    <property type="evidence" value="ECO:0000318"/>
    <property type="project" value="GO_Central"/>
</dbReference>
<dbReference type="GO" id="GO:0071042">
    <property type="term" value="P:nuclear polyadenylation-dependent mRNA catabolic process"/>
    <property type="evidence" value="ECO:0000315"/>
    <property type="project" value="SGD"/>
</dbReference>
<dbReference type="GO" id="GO:0000184">
    <property type="term" value="P:nuclear-transcribed mRNA catabolic process, nonsense-mediated decay"/>
    <property type="evidence" value="ECO:0000353"/>
    <property type="project" value="SGD"/>
</dbReference>
<dbReference type="GO" id="GO:0006364">
    <property type="term" value="P:rRNA processing"/>
    <property type="evidence" value="ECO:0000315"/>
    <property type="project" value="SGD"/>
</dbReference>
<dbReference type="GO" id="GO:0006369">
    <property type="term" value="P:termination of RNA polymerase II transcription"/>
    <property type="evidence" value="ECO:0000314"/>
    <property type="project" value="SGD"/>
</dbReference>
<dbReference type="CDD" id="cd17966">
    <property type="entry name" value="DEADc_DDX5_DDX17"/>
    <property type="match status" value="1"/>
</dbReference>
<dbReference type="CDD" id="cd18787">
    <property type="entry name" value="SF2_C_DEAD"/>
    <property type="match status" value="1"/>
</dbReference>
<dbReference type="FunFam" id="3.40.50.300:FF:000008">
    <property type="entry name" value="ATP-dependent RNA helicase RhlB"/>
    <property type="match status" value="1"/>
</dbReference>
<dbReference type="FunFam" id="3.40.50.300:FF:000079">
    <property type="entry name" value="probable ATP-dependent RNA helicase DDX17"/>
    <property type="match status" value="1"/>
</dbReference>
<dbReference type="Gene3D" id="3.40.50.300">
    <property type="entry name" value="P-loop containing nucleotide triphosphate hydrolases"/>
    <property type="match status" value="2"/>
</dbReference>
<dbReference type="InterPro" id="IPR011545">
    <property type="entry name" value="DEAD/DEAH_box_helicase_dom"/>
</dbReference>
<dbReference type="InterPro" id="IPR014001">
    <property type="entry name" value="Helicase_ATP-bd"/>
</dbReference>
<dbReference type="InterPro" id="IPR001650">
    <property type="entry name" value="Helicase_C-like"/>
</dbReference>
<dbReference type="InterPro" id="IPR027417">
    <property type="entry name" value="P-loop_NTPase"/>
</dbReference>
<dbReference type="InterPro" id="IPR000629">
    <property type="entry name" value="RNA-helicase_DEAD-box_CS"/>
</dbReference>
<dbReference type="InterPro" id="IPR014014">
    <property type="entry name" value="RNA_helicase_DEAD_Q_motif"/>
</dbReference>
<dbReference type="PANTHER" id="PTHR47958">
    <property type="entry name" value="ATP-DEPENDENT RNA HELICASE DBP3"/>
    <property type="match status" value="1"/>
</dbReference>
<dbReference type="Pfam" id="PF00270">
    <property type="entry name" value="DEAD"/>
    <property type="match status" value="1"/>
</dbReference>
<dbReference type="Pfam" id="PF00271">
    <property type="entry name" value="Helicase_C"/>
    <property type="match status" value="1"/>
</dbReference>
<dbReference type="SMART" id="SM00487">
    <property type="entry name" value="DEXDc"/>
    <property type="match status" value="1"/>
</dbReference>
<dbReference type="SMART" id="SM00490">
    <property type="entry name" value="HELICc"/>
    <property type="match status" value="1"/>
</dbReference>
<dbReference type="SUPFAM" id="SSF52540">
    <property type="entry name" value="P-loop containing nucleoside triphosphate hydrolases"/>
    <property type="match status" value="1"/>
</dbReference>
<dbReference type="PROSITE" id="PS00039">
    <property type="entry name" value="DEAD_ATP_HELICASE"/>
    <property type="match status" value="1"/>
</dbReference>
<dbReference type="PROSITE" id="PS51192">
    <property type="entry name" value="HELICASE_ATP_BIND_1"/>
    <property type="match status" value="1"/>
</dbReference>
<dbReference type="PROSITE" id="PS51194">
    <property type="entry name" value="HELICASE_CTER"/>
    <property type="match status" value="1"/>
</dbReference>
<dbReference type="PROSITE" id="PS51195">
    <property type="entry name" value="Q_MOTIF"/>
    <property type="match status" value="1"/>
</dbReference>